<feature type="chain" id="PRO_1000053253" description="ATP synthase gamma chain">
    <location>
        <begin position="1"/>
        <end position="291"/>
    </location>
</feature>
<name>ATPG_METPP</name>
<organism>
    <name type="scientific">Methylibium petroleiphilum (strain ATCC BAA-1232 / LMG 22953 / PM1)</name>
    <dbReference type="NCBI Taxonomy" id="420662"/>
    <lineage>
        <taxon>Bacteria</taxon>
        <taxon>Pseudomonadati</taxon>
        <taxon>Pseudomonadota</taxon>
        <taxon>Betaproteobacteria</taxon>
        <taxon>Burkholderiales</taxon>
        <taxon>Sphaerotilaceae</taxon>
        <taxon>Methylibium</taxon>
    </lineage>
</organism>
<proteinExistence type="inferred from homology"/>
<sequence>MAAGKEIRGKIKSVENTKKITKAMEMVAASKMRKAQERMRAARPYADKIRNITANLAQANPEYTHPFMAVSATAAKTAGFVVVTTDKGLCGGLNTNVLRAVTGKLRELESQGSKAEAVAIGNKGLGFLNRIGAKVVSHATQLGDAPHLERLIGPVKVLLDAYAEGKLNAVYLCYTRFINTMKQEPVVEQLLPLASDKLKADAGEHGWDYLYEPDAKTVIDDLLLRFVEALIYQAVAENMASEQSARMVAMKAATDNAGTLIGELKLVYNKTRQAAITKELSEIVSGAAAVG</sequence>
<gene>
    <name evidence="1" type="primary">atpG</name>
    <name type="ordered locus">Mpe_A0196</name>
</gene>
<evidence type="ECO:0000255" key="1">
    <source>
        <dbReference type="HAMAP-Rule" id="MF_00815"/>
    </source>
</evidence>
<protein>
    <recommendedName>
        <fullName evidence="1">ATP synthase gamma chain</fullName>
    </recommendedName>
    <alternativeName>
        <fullName evidence="1">ATP synthase F1 sector gamma subunit</fullName>
    </alternativeName>
    <alternativeName>
        <fullName evidence="1">F-ATPase gamma subunit</fullName>
    </alternativeName>
</protein>
<dbReference type="EMBL" id="CP000555">
    <property type="protein sequence ID" value="ABM93158.1"/>
    <property type="molecule type" value="Genomic_DNA"/>
</dbReference>
<dbReference type="RefSeq" id="WP_011827797.1">
    <property type="nucleotide sequence ID" value="NC_008825.1"/>
</dbReference>
<dbReference type="SMR" id="A2SC69"/>
<dbReference type="STRING" id="420662.Mpe_A0196"/>
<dbReference type="KEGG" id="mpt:Mpe_A0196"/>
<dbReference type="eggNOG" id="COG0224">
    <property type="taxonomic scope" value="Bacteria"/>
</dbReference>
<dbReference type="HOGENOM" id="CLU_050669_0_1_4"/>
<dbReference type="Proteomes" id="UP000000366">
    <property type="component" value="Chromosome"/>
</dbReference>
<dbReference type="GO" id="GO:0005886">
    <property type="term" value="C:plasma membrane"/>
    <property type="evidence" value="ECO:0007669"/>
    <property type="project" value="UniProtKB-SubCell"/>
</dbReference>
<dbReference type="GO" id="GO:0045259">
    <property type="term" value="C:proton-transporting ATP synthase complex"/>
    <property type="evidence" value="ECO:0007669"/>
    <property type="project" value="UniProtKB-KW"/>
</dbReference>
<dbReference type="GO" id="GO:0005524">
    <property type="term" value="F:ATP binding"/>
    <property type="evidence" value="ECO:0007669"/>
    <property type="project" value="UniProtKB-UniRule"/>
</dbReference>
<dbReference type="GO" id="GO:0046933">
    <property type="term" value="F:proton-transporting ATP synthase activity, rotational mechanism"/>
    <property type="evidence" value="ECO:0007669"/>
    <property type="project" value="UniProtKB-UniRule"/>
</dbReference>
<dbReference type="GO" id="GO:0042777">
    <property type="term" value="P:proton motive force-driven plasma membrane ATP synthesis"/>
    <property type="evidence" value="ECO:0007669"/>
    <property type="project" value="UniProtKB-UniRule"/>
</dbReference>
<dbReference type="CDD" id="cd12151">
    <property type="entry name" value="F1-ATPase_gamma"/>
    <property type="match status" value="1"/>
</dbReference>
<dbReference type="FunFam" id="1.10.287.80:FF:000005">
    <property type="entry name" value="ATP synthase gamma chain"/>
    <property type="match status" value="1"/>
</dbReference>
<dbReference type="Gene3D" id="3.40.1380.10">
    <property type="match status" value="1"/>
</dbReference>
<dbReference type="Gene3D" id="1.10.287.80">
    <property type="entry name" value="ATP synthase, gamma subunit, helix hairpin domain"/>
    <property type="match status" value="1"/>
</dbReference>
<dbReference type="HAMAP" id="MF_00815">
    <property type="entry name" value="ATP_synth_gamma_bact"/>
    <property type="match status" value="1"/>
</dbReference>
<dbReference type="InterPro" id="IPR035968">
    <property type="entry name" value="ATP_synth_F1_ATPase_gsu"/>
</dbReference>
<dbReference type="InterPro" id="IPR000131">
    <property type="entry name" value="ATP_synth_F1_gsu"/>
</dbReference>
<dbReference type="InterPro" id="IPR023632">
    <property type="entry name" value="ATP_synth_F1_gsu_CS"/>
</dbReference>
<dbReference type="NCBIfam" id="TIGR01146">
    <property type="entry name" value="ATPsyn_F1gamma"/>
    <property type="match status" value="1"/>
</dbReference>
<dbReference type="NCBIfam" id="NF004144">
    <property type="entry name" value="PRK05621.1-1"/>
    <property type="match status" value="1"/>
</dbReference>
<dbReference type="PANTHER" id="PTHR11693">
    <property type="entry name" value="ATP SYNTHASE GAMMA CHAIN"/>
    <property type="match status" value="1"/>
</dbReference>
<dbReference type="PANTHER" id="PTHR11693:SF22">
    <property type="entry name" value="ATP SYNTHASE SUBUNIT GAMMA, MITOCHONDRIAL"/>
    <property type="match status" value="1"/>
</dbReference>
<dbReference type="Pfam" id="PF00231">
    <property type="entry name" value="ATP-synt"/>
    <property type="match status" value="1"/>
</dbReference>
<dbReference type="PRINTS" id="PR00126">
    <property type="entry name" value="ATPASEGAMMA"/>
</dbReference>
<dbReference type="SUPFAM" id="SSF52943">
    <property type="entry name" value="ATP synthase (F1-ATPase), gamma subunit"/>
    <property type="match status" value="1"/>
</dbReference>
<dbReference type="PROSITE" id="PS00153">
    <property type="entry name" value="ATPASE_GAMMA"/>
    <property type="match status" value="1"/>
</dbReference>
<comment type="function">
    <text evidence="1">Produces ATP from ADP in the presence of a proton gradient across the membrane. The gamma chain is believed to be important in regulating ATPase activity and the flow of protons through the CF(0) complex.</text>
</comment>
<comment type="subunit">
    <text evidence="1">F-type ATPases have 2 components, CF(1) - the catalytic core - and CF(0) - the membrane proton channel. CF(1) has five subunits: alpha(3), beta(3), gamma(1), delta(1), epsilon(1). CF(0) has three main subunits: a, b and c.</text>
</comment>
<comment type="subcellular location">
    <subcellularLocation>
        <location evidence="1">Cell inner membrane</location>
        <topology evidence="1">Peripheral membrane protein</topology>
    </subcellularLocation>
</comment>
<comment type="similarity">
    <text evidence="1">Belongs to the ATPase gamma chain family.</text>
</comment>
<accession>A2SC69</accession>
<reference key="1">
    <citation type="journal article" date="2007" name="J. Bacteriol.">
        <title>Whole-genome analysis of the methyl tert-butyl ether-degrading beta-proteobacterium Methylibium petroleiphilum PM1.</title>
        <authorList>
            <person name="Kane S.R."/>
            <person name="Chakicherla A.Y."/>
            <person name="Chain P.S.G."/>
            <person name="Schmidt R."/>
            <person name="Shin M.W."/>
            <person name="Legler T.C."/>
            <person name="Scow K.M."/>
            <person name="Larimer F.W."/>
            <person name="Lucas S.M."/>
            <person name="Richardson P.M."/>
            <person name="Hristova K.R."/>
        </authorList>
    </citation>
    <scope>NUCLEOTIDE SEQUENCE [LARGE SCALE GENOMIC DNA]</scope>
    <source>
        <strain>ATCC BAA-1232 / LMG 22953 / PM1</strain>
    </source>
</reference>
<keyword id="KW-0066">ATP synthesis</keyword>
<keyword id="KW-0997">Cell inner membrane</keyword>
<keyword id="KW-1003">Cell membrane</keyword>
<keyword id="KW-0139">CF(1)</keyword>
<keyword id="KW-0375">Hydrogen ion transport</keyword>
<keyword id="KW-0406">Ion transport</keyword>
<keyword id="KW-0472">Membrane</keyword>
<keyword id="KW-1185">Reference proteome</keyword>
<keyword id="KW-0813">Transport</keyword>